<name>RL29_BRUMB</name>
<sequence length="66" mass="7512">MKAADVRAKSLDQLNDELGTLKKEQFNLRFQKATGQLEKTARVKQVRRDIARIKTIARQKAAESKA</sequence>
<comment type="similarity">
    <text evidence="1">Belongs to the universal ribosomal protein uL29 family.</text>
</comment>
<reference key="1">
    <citation type="submission" date="2009-03" db="EMBL/GenBank/DDBJ databases">
        <title>Brucella melitensis ATCC 23457 whole genome shotgun sequencing project.</title>
        <authorList>
            <person name="Setubal J.C."/>
            <person name="Boyle S."/>
            <person name="Crasta O.R."/>
            <person name="Gillespie J.J."/>
            <person name="Kenyon R.W."/>
            <person name="Lu J."/>
            <person name="Mane S."/>
            <person name="Nagrani S."/>
            <person name="Shallom J.M."/>
            <person name="Shallom S."/>
            <person name="Shukla M."/>
            <person name="Snyder E.E."/>
            <person name="Sobral B.W."/>
            <person name="Wattam A.R."/>
            <person name="Will R."/>
            <person name="Williams K."/>
            <person name="Yoo H."/>
            <person name="Munk C."/>
            <person name="Tapia R."/>
            <person name="Han C."/>
            <person name="Detter J.C."/>
            <person name="Bruce D."/>
            <person name="Brettin T.S."/>
        </authorList>
    </citation>
    <scope>NUCLEOTIDE SEQUENCE [LARGE SCALE GENOMIC DNA]</scope>
    <source>
        <strain>ATCC 23457</strain>
    </source>
</reference>
<dbReference type="EMBL" id="CP001488">
    <property type="protein sequence ID" value="ACO01001.1"/>
    <property type="molecule type" value="Genomic_DNA"/>
</dbReference>
<dbReference type="RefSeq" id="WP_002964354.1">
    <property type="nucleotide sequence ID" value="NC_012441.1"/>
</dbReference>
<dbReference type="SMR" id="C0RJJ3"/>
<dbReference type="GeneID" id="97533532"/>
<dbReference type="KEGG" id="bmi:BMEA_A1270"/>
<dbReference type="HOGENOM" id="CLU_158491_1_0_5"/>
<dbReference type="Proteomes" id="UP000001748">
    <property type="component" value="Chromosome I"/>
</dbReference>
<dbReference type="GO" id="GO:0022625">
    <property type="term" value="C:cytosolic large ribosomal subunit"/>
    <property type="evidence" value="ECO:0007669"/>
    <property type="project" value="TreeGrafter"/>
</dbReference>
<dbReference type="GO" id="GO:0003735">
    <property type="term" value="F:structural constituent of ribosome"/>
    <property type="evidence" value="ECO:0007669"/>
    <property type="project" value="InterPro"/>
</dbReference>
<dbReference type="GO" id="GO:0006412">
    <property type="term" value="P:translation"/>
    <property type="evidence" value="ECO:0007669"/>
    <property type="project" value="UniProtKB-UniRule"/>
</dbReference>
<dbReference type="CDD" id="cd00427">
    <property type="entry name" value="Ribosomal_L29_HIP"/>
    <property type="match status" value="1"/>
</dbReference>
<dbReference type="FunFam" id="1.10.287.310:FF:000001">
    <property type="entry name" value="50S ribosomal protein L29"/>
    <property type="match status" value="1"/>
</dbReference>
<dbReference type="Gene3D" id="1.10.287.310">
    <property type="match status" value="1"/>
</dbReference>
<dbReference type="HAMAP" id="MF_00374">
    <property type="entry name" value="Ribosomal_uL29"/>
    <property type="match status" value="1"/>
</dbReference>
<dbReference type="InterPro" id="IPR050063">
    <property type="entry name" value="Ribosomal_protein_uL29"/>
</dbReference>
<dbReference type="InterPro" id="IPR001854">
    <property type="entry name" value="Ribosomal_uL29"/>
</dbReference>
<dbReference type="InterPro" id="IPR018254">
    <property type="entry name" value="Ribosomal_uL29_CS"/>
</dbReference>
<dbReference type="InterPro" id="IPR036049">
    <property type="entry name" value="Ribosomal_uL29_sf"/>
</dbReference>
<dbReference type="NCBIfam" id="TIGR00012">
    <property type="entry name" value="L29"/>
    <property type="match status" value="1"/>
</dbReference>
<dbReference type="PANTHER" id="PTHR10916">
    <property type="entry name" value="60S RIBOSOMAL PROTEIN L35/50S RIBOSOMAL PROTEIN L29"/>
    <property type="match status" value="1"/>
</dbReference>
<dbReference type="PANTHER" id="PTHR10916:SF0">
    <property type="entry name" value="LARGE RIBOSOMAL SUBUNIT PROTEIN UL29C"/>
    <property type="match status" value="1"/>
</dbReference>
<dbReference type="Pfam" id="PF00831">
    <property type="entry name" value="Ribosomal_L29"/>
    <property type="match status" value="1"/>
</dbReference>
<dbReference type="SUPFAM" id="SSF46561">
    <property type="entry name" value="Ribosomal protein L29 (L29p)"/>
    <property type="match status" value="1"/>
</dbReference>
<dbReference type="PROSITE" id="PS00579">
    <property type="entry name" value="RIBOSOMAL_L29"/>
    <property type="match status" value="1"/>
</dbReference>
<keyword id="KW-0687">Ribonucleoprotein</keyword>
<keyword id="KW-0689">Ribosomal protein</keyword>
<gene>
    <name evidence="1" type="primary">rpmC</name>
    <name type="ordered locus">BMEA_A1270</name>
</gene>
<accession>C0RJJ3</accession>
<evidence type="ECO:0000255" key="1">
    <source>
        <dbReference type="HAMAP-Rule" id="MF_00374"/>
    </source>
</evidence>
<evidence type="ECO:0000305" key="2"/>
<proteinExistence type="inferred from homology"/>
<feature type="chain" id="PRO_1000193999" description="Large ribosomal subunit protein uL29">
    <location>
        <begin position="1"/>
        <end position="66"/>
    </location>
</feature>
<protein>
    <recommendedName>
        <fullName evidence="1">Large ribosomal subunit protein uL29</fullName>
    </recommendedName>
    <alternativeName>
        <fullName evidence="2">50S ribosomal protein L29</fullName>
    </alternativeName>
</protein>
<organism>
    <name type="scientific">Brucella melitensis biotype 2 (strain ATCC 23457)</name>
    <dbReference type="NCBI Taxonomy" id="546272"/>
    <lineage>
        <taxon>Bacteria</taxon>
        <taxon>Pseudomonadati</taxon>
        <taxon>Pseudomonadota</taxon>
        <taxon>Alphaproteobacteria</taxon>
        <taxon>Hyphomicrobiales</taxon>
        <taxon>Brucellaceae</taxon>
        <taxon>Brucella/Ochrobactrum group</taxon>
        <taxon>Brucella</taxon>
    </lineage>
</organism>